<dbReference type="EC" id="7.1.1.2"/>
<dbReference type="EMBL" id="AY598582">
    <property type="protein sequence ID" value="AAU00528.1"/>
    <property type="molecule type" value="Genomic_DNA"/>
</dbReference>
<dbReference type="RefSeq" id="YP_001096036.1">
    <property type="nucleotide sequence ID" value="NC_009126.1"/>
</dbReference>
<dbReference type="SMR" id="Q3L6Q6"/>
<dbReference type="GeneID" id="4924860"/>
<dbReference type="CTD" id="4539"/>
<dbReference type="GO" id="GO:0005743">
    <property type="term" value="C:mitochondrial inner membrane"/>
    <property type="evidence" value="ECO:0000250"/>
    <property type="project" value="UniProtKB"/>
</dbReference>
<dbReference type="GO" id="GO:0045271">
    <property type="term" value="C:respiratory chain complex I"/>
    <property type="evidence" value="ECO:0000250"/>
    <property type="project" value="UniProtKB"/>
</dbReference>
<dbReference type="GO" id="GO:0008137">
    <property type="term" value="F:NADH dehydrogenase (ubiquinone) activity"/>
    <property type="evidence" value="ECO:0000250"/>
    <property type="project" value="UniProtKB"/>
</dbReference>
<dbReference type="GO" id="GO:0042773">
    <property type="term" value="P:ATP synthesis coupled electron transport"/>
    <property type="evidence" value="ECO:0007669"/>
    <property type="project" value="InterPro"/>
</dbReference>
<dbReference type="FunFam" id="1.10.287.3510:FF:000002">
    <property type="entry name" value="NADH-ubiquinone oxidoreductase chain 4L"/>
    <property type="match status" value="1"/>
</dbReference>
<dbReference type="Gene3D" id="1.10.287.3510">
    <property type="match status" value="1"/>
</dbReference>
<dbReference type="InterPro" id="IPR001133">
    <property type="entry name" value="NADH_UbQ_OxRdtase_chain4L/K"/>
</dbReference>
<dbReference type="InterPro" id="IPR039428">
    <property type="entry name" value="NUOK/Mnh_C1-like"/>
</dbReference>
<dbReference type="PANTHER" id="PTHR11434:SF0">
    <property type="entry name" value="NADH-UBIQUINONE OXIDOREDUCTASE CHAIN 4L"/>
    <property type="match status" value="1"/>
</dbReference>
<dbReference type="PANTHER" id="PTHR11434">
    <property type="entry name" value="NADH-UBIQUINONE OXIDOREDUCTASE SUBUNIT ND4L"/>
    <property type="match status" value="1"/>
</dbReference>
<dbReference type="Pfam" id="PF00420">
    <property type="entry name" value="Oxidored_q2"/>
    <property type="match status" value="1"/>
</dbReference>
<evidence type="ECO:0000250" key="1">
    <source>
        <dbReference type="UniProtKB" id="P03901"/>
    </source>
</evidence>
<evidence type="ECO:0000250" key="2">
    <source>
        <dbReference type="UniProtKB" id="P03902"/>
    </source>
</evidence>
<evidence type="ECO:0000255" key="3"/>
<evidence type="ECO:0000305" key="4"/>
<comment type="function">
    <text evidence="1">Core subunit of the mitochondrial membrane respiratory chain NADH dehydrogenase (Complex I) which catalyzes electron transfer from NADH through the respiratory chain, using ubiquinone as an electron acceptor. Part of the enzyme membrane arm which is embedded in the lipid bilayer and involved in proton translocation.</text>
</comment>
<comment type="catalytic activity">
    <reaction evidence="1">
        <text>a ubiquinone + NADH + 5 H(+)(in) = a ubiquinol + NAD(+) + 4 H(+)(out)</text>
        <dbReference type="Rhea" id="RHEA:29091"/>
        <dbReference type="Rhea" id="RHEA-COMP:9565"/>
        <dbReference type="Rhea" id="RHEA-COMP:9566"/>
        <dbReference type="ChEBI" id="CHEBI:15378"/>
        <dbReference type="ChEBI" id="CHEBI:16389"/>
        <dbReference type="ChEBI" id="CHEBI:17976"/>
        <dbReference type="ChEBI" id="CHEBI:57540"/>
        <dbReference type="ChEBI" id="CHEBI:57945"/>
        <dbReference type="EC" id="7.1.1.2"/>
    </reaction>
    <physiologicalReaction direction="left-to-right" evidence="1">
        <dbReference type="Rhea" id="RHEA:29092"/>
    </physiologicalReaction>
</comment>
<comment type="subunit">
    <text evidence="2">Core subunit of respiratory chain NADH dehydrogenase (Complex I) which is composed of 45 different subunits.</text>
</comment>
<comment type="subcellular location">
    <subcellularLocation>
        <location evidence="2">Mitochondrion inner membrane</location>
        <topology evidence="3">Multi-pass membrane protein</topology>
    </subcellularLocation>
</comment>
<comment type="similarity">
    <text evidence="4">Belongs to the complex I subunit 4L family.</text>
</comment>
<gene>
    <name type="primary">MT-ND4L</name>
    <name type="synonym">MTND4L</name>
    <name type="synonym">NADH4L</name>
    <name type="synonym">ND4L</name>
</gene>
<proteinExistence type="inferred from homology"/>
<organism>
    <name type="scientific">Procyon lotor</name>
    <name type="common">Raccoon</name>
    <dbReference type="NCBI Taxonomy" id="9654"/>
    <lineage>
        <taxon>Eukaryota</taxon>
        <taxon>Metazoa</taxon>
        <taxon>Chordata</taxon>
        <taxon>Craniata</taxon>
        <taxon>Vertebrata</taxon>
        <taxon>Euteleostomi</taxon>
        <taxon>Mammalia</taxon>
        <taxon>Eutheria</taxon>
        <taxon>Laurasiatheria</taxon>
        <taxon>Carnivora</taxon>
        <taxon>Caniformia</taxon>
        <taxon>Musteloidea</taxon>
        <taxon>Procyonidae</taxon>
        <taxon>Procyon</taxon>
    </lineage>
</organism>
<sequence>MSMVYVNISLAFTLSLMGLLMYRSHLMSSLLCLEGMMLSLFVMMSITIMSNHFTLASMAPIILLVFAACEAALGLSLLVMISNTYGTDYVQNLNLLQC</sequence>
<name>NU4LM_PROLO</name>
<feature type="chain" id="PRO_0000275110" description="NADH-ubiquinone oxidoreductase chain 4L">
    <location>
        <begin position="1"/>
        <end position="98"/>
    </location>
</feature>
<feature type="transmembrane region" description="Helical" evidence="3">
    <location>
        <begin position="1"/>
        <end position="21"/>
    </location>
</feature>
<feature type="transmembrane region" description="Helical" evidence="3">
    <location>
        <begin position="29"/>
        <end position="49"/>
    </location>
</feature>
<feature type="transmembrane region" description="Helical" evidence="3">
    <location>
        <begin position="61"/>
        <end position="81"/>
    </location>
</feature>
<reference key="1">
    <citation type="journal article" date="2005" name="Mol. Phylogenet. Evol.">
        <title>A phylogeny of the Caniformia (order Carnivora) based on 12 complete protein-coding mitochondrial genes.</title>
        <authorList>
            <person name="Delisle I."/>
            <person name="Strobeck C."/>
        </authorList>
    </citation>
    <scope>NUCLEOTIDE SEQUENCE [GENOMIC DNA]</scope>
</reference>
<geneLocation type="mitochondrion"/>
<accession>Q3L6Q6</accession>
<keyword id="KW-0249">Electron transport</keyword>
<keyword id="KW-0472">Membrane</keyword>
<keyword id="KW-0496">Mitochondrion</keyword>
<keyword id="KW-0999">Mitochondrion inner membrane</keyword>
<keyword id="KW-0520">NAD</keyword>
<keyword id="KW-0679">Respiratory chain</keyword>
<keyword id="KW-1278">Translocase</keyword>
<keyword id="KW-0812">Transmembrane</keyword>
<keyword id="KW-1133">Transmembrane helix</keyword>
<keyword id="KW-0813">Transport</keyword>
<keyword id="KW-0830">Ubiquinone</keyword>
<protein>
    <recommendedName>
        <fullName>NADH-ubiquinone oxidoreductase chain 4L</fullName>
        <ecNumber>7.1.1.2</ecNumber>
    </recommendedName>
    <alternativeName>
        <fullName>NADH dehydrogenase subunit 4L</fullName>
    </alternativeName>
</protein>